<feature type="chain" id="PRO_1000056611" description="Ribosomal RNA small subunit methyltransferase A">
    <location>
        <begin position="1"/>
        <end position="273"/>
    </location>
</feature>
<feature type="binding site" evidence="1">
    <location>
        <position position="18"/>
    </location>
    <ligand>
        <name>S-adenosyl-L-methionine</name>
        <dbReference type="ChEBI" id="CHEBI:59789"/>
    </ligand>
</feature>
<feature type="binding site" evidence="1">
    <location>
        <position position="20"/>
    </location>
    <ligand>
        <name>S-adenosyl-L-methionine</name>
        <dbReference type="ChEBI" id="CHEBI:59789"/>
    </ligand>
</feature>
<feature type="binding site" evidence="1">
    <location>
        <position position="45"/>
    </location>
    <ligand>
        <name>S-adenosyl-L-methionine</name>
        <dbReference type="ChEBI" id="CHEBI:59789"/>
    </ligand>
</feature>
<feature type="binding site" evidence="1">
    <location>
        <position position="66"/>
    </location>
    <ligand>
        <name>S-adenosyl-L-methionine</name>
        <dbReference type="ChEBI" id="CHEBI:59789"/>
    </ligand>
</feature>
<feature type="binding site" evidence="1">
    <location>
        <position position="91"/>
    </location>
    <ligand>
        <name>S-adenosyl-L-methionine</name>
        <dbReference type="ChEBI" id="CHEBI:59789"/>
    </ligand>
</feature>
<feature type="binding site" evidence="1">
    <location>
        <position position="113"/>
    </location>
    <ligand>
        <name>S-adenosyl-L-methionine</name>
        <dbReference type="ChEBI" id="CHEBI:59789"/>
    </ligand>
</feature>
<gene>
    <name evidence="1" type="primary">rsmA</name>
    <name evidence="1" type="synonym">ksgA</name>
    <name type="ordered locus">CKO_03329</name>
</gene>
<reference key="1">
    <citation type="submission" date="2007-08" db="EMBL/GenBank/DDBJ databases">
        <authorList>
            <consortium name="The Citrobacter koseri Genome Sequencing Project"/>
            <person name="McClelland M."/>
            <person name="Sanderson E.K."/>
            <person name="Porwollik S."/>
            <person name="Spieth J."/>
            <person name="Clifton W.S."/>
            <person name="Latreille P."/>
            <person name="Courtney L."/>
            <person name="Wang C."/>
            <person name="Pepin K."/>
            <person name="Bhonagiri V."/>
            <person name="Nash W."/>
            <person name="Johnson M."/>
            <person name="Thiruvilangam P."/>
            <person name="Wilson R."/>
        </authorList>
    </citation>
    <scope>NUCLEOTIDE SEQUENCE [LARGE SCALE GENOMIC DNA]</scope>
    <source>
        <strain>ATCC BAA-895 / CDC 4225-83 / SGSC4696</strain>
    </source>
</reference>
<accession>A8ALP9</accession>
<sequence length="273" mass="30512">MNNRVHQGHLARKRFGQNFLNDQFVIDSIVSAINPQKGQAMVEIGPGLAALTEPVGERLDQLTVIELDRDLAARLQTHPFLGPKLTIYQQDAMTMNFGELSEKIGQPLRVFGNLPYNISTPLMFHLFSYTDAIADMHFMLQKEVVNRLVAGPNSKAYGRLSVMAQYYCQVIPVLEVPPSAFTPPPKVDSAVVRLVPHTTMPYPVKDIRVLSRITTEAFNQRRKTIRNSLGNLFSVEVLTELGIDPALRAENISVAQYCQMANYLSENAPSKES</sequence>
<proteinExistence type="inferred from homology"/>
<comment type="function">
    <text evidence="1">Specifically dimethylates two adjacent adenosines (A1518 and A1519) in the loop of a conserved hairpin near the 3'-end of 16S rRNA in the 30S particle. May play a critical role in biogenesis of 30S subunits.</text>
</comment>
<comment type="catalytic activity">
    <reaction evidence="1">
        <text>adenosine(1518)/adenosine(1519) in 16S rRNA + 4 S-adenosyl-L-methionine = N(6)-dimethyladenosine(1518)/N(6)-dimethyladenosine(1519) in 16S rRNA + 4 S-adenosyl-L-homocysteine + 4 H(+)</text>
        <dbReference type="Rhea" id="RHEA:19609"/>
        <dbReference type="Rhea" id="RHEA-COMP:10232"/>
        <dbReference type="Rhea" id="RHEA-COMP:10233"/>
        <dbReference type="ChEBI" id="CHEBI:15378"/>
        <dbReference type="ChEBI" id="CHEBI:57856"/>
        <dbReference type="ChEBI" id="CHEBI:59789"/>
        <dbReference type="ChEBI" id="CHEBI:74411"/>
        <dbReference type="ChEBI" id="CHEBI:74493"/>
        <dbReference type="EC" id="2.1.1.182"/>
    </reaction>
</comment>
<comment type="subcellular location">
    <subcellularLocation>
        <location evidence="1">Cytoplasm</location>
    </subcellularLocation>
</comment>
<comment type="similarity">
    <text evidence="1">Belongs to the class I-like SAM-binding methyltransferase superfamily. rRNA adenine N(6)-methyltransferase family. RsmA subfamily.</text>
</comment>
<dbReference type="EC" id="2.1.1.182" evidence="1"/>
<dbReference type="EMBL" id="CP000822">
    <property type="protein sequence ID" value="ABV14412.1"/>
    <property type="molecule type" value="Genomic_DNA"/>
</dbReference>
<dbReference type="RefSeq" id="WP_012134115.1">
    <property type="nucleotide sequence ID" value="NC_009792.1"/>
</dbReference>
<dbReference type="SMR" id="A8ALP9"/>
<dbReference type="STRING" id="290338.CKO_03329"/>
<dbReference type="GeneID" id="45137094"/>
<dbReference type="KEGG" id="cko:CKO_03329"/>
<dbReference type="HOGENOM" id="CLU_041220_0_1_6"/>
<dbReference type="OrthoDB" id="9814755at2"/>
<dbReference type="Proteomes" id="UP000008148">
    <property type="component" value="Chromosome"/>
</dbReference>
<dbReference type="GO" id="GO:0005829">
    <property type="term" value="C:cytosol"/>
    <property type="evidence" value="ECO:0007669"/>
    <property type="project" value="TreeGrafter"/>
</dbReference>
<dbReference type="GO" id="GO:0052908">
    <property type="term" value="F:16S rRNA (adenine(1518)-N(6)/adenine(1519)-N(6))-dimethyltransferase activity"/>
    <property type="evidence" value="ECO:0007669"/>
    <property type="project" value="UniProtKB-EC"/>
</dbReference>
<dbReference type="GO" id="GO:0003723">
    <property type="term" value="F:RNA binding"/>
    <property type="evidence" value="ECO:0007669"/>
    <property type="project" value="UniProtKB-KW"/>
</dbReference>
<dbReference type="FunFam" id="1.10.8.100:FF:000001">
    <property type="entry name" value="Ribosomal RNA small subunit methyltransferase A"/>
    <property type="match status" value="1"/>
</dbReference>
<dbReference type="FunFam" id="3.40.50.150:FF:000006">
    <property type="entry name" value="Ribosomal RNA small subunit methyltransferase A"/>
    <property type="match status" value="1"/>
</dbReference>
<dbReference type="Gene3D" id="1.10.8.100">
    <property type="entry name" value="Ribosomal RNA adenine dimethylase-like, domain 2"/>
    <property type="match status" value="1"/>
</dbReference>
<dbReference type="Gene3D" id="3.40.50.150">
    <property type="entry name" value="Vaccinia Virus protein VP39"/>
    <property type="match status" value="1"/>
</dbReference>
<dbReference type="HAMAP" id="MF_00607">
    <property type="entry name" value="16SrRNA_methyltr_A"/>
    <property type="match status" value="1"/>
</dbReference>
<dbReference type="InterPro" id="IPR001737">
    <property type="entry name" value="KsgA/Erm"/>
</dbReference>
<dbReference type="InterPro" id="IPR023165">
    <property type="entry name" value="rRNA_Ade_diMease-like_C"/>
</dbReference>
<dbReference type="InterPro" id="IPR020596">
    <property type="entry name" value="rRNA_Ade_Mease_Trfase_CS"/>
</dbReference>
<dbReference type="InterPro" id="IPR020598">
    <property type="entry name" value="rRNA_Ade_methylase_Trfase_N"/>
</dbReference>
<dbReference type="InterPro" id="IPR011530">
    <property type="entry name" value="rRNA_adenine_dimethylase"/>
</dbReference>
<dbReference type="InterPro" id="IPR029063">
    <property type="entry name" value="SAM-dependent_MTases_sf"/>
</dbReference>
<dbReference type="NCBIfam" id="TIGR00755">
    <property type="entry name" value="ksgA"/>
    <property type="match status" value="1"/>
</dbReference>
<dbReference type="PANTHER" id="PTHR11727">
    <property type="entry name" value="DIMETHYLADENOSINE TRANSFERASE"/>
    <property type="match status" value="1"/>
</dbReference>
<dbReference type="PANTHER" id="PTHR11727:SF7">
    <property type="entry name" value="DIMETHYLADENOSINE TRANSFERASE-RELATED"/>
    <property type="match status" value="1"/>
</dbReference>
<dbReference type="Pfam" id="PF00398">
    <property type="entry name" value="RrnaAD"/>
    <property type="match status" value="1"/>
</dbReference>
<dbReference type="SMART" id="SM00650">
    <property type="entry name" value="rADc"/>
    <property type="match status" value="1"/>
</dbReference>
<dbReference type="SUPFAM" id="SSF53335">
    <property type="entry name" value="S-adenosyl-L-methionine-dependent methyltransferases"/>
    <property type="match status" value="1"/>
</dbReference>
<dbReference type="PROSITE" id="PS01131">
    <property type="entry name" value="RRNA_A_DIMETH"/>
    <property type="match status" value="1"/>
</dbReference>
<dbReference type="PROSITE" id="PS51689">
    <property type="entry name" value="SAM_RNA_A_N6_MT"/>
    <property type="match status" value="1"/>
</dbReference>
<organism>
    <name type="scientific">Citrobacter koseri (strain ATCC BAA-895 / CDC 4225-83 / SGSC4696)</name>
    <dbReference type="NCBI Taxonomy" id="290338"/>
    <lineage>
        <taxon>Bacteria</taxon>
        <taxon>Pseudomonadati</taxon>
        <taxon>Pseudomonadota</taxon>
        <taxon>Gammaproteobacteria</taxon>
        <taxon>Enterobacterales</taxon>
        <taxon>Enterobacteriaceae</taxon>
        <taxon>Citrobacter</taxon>
    </lineage>
</organism>
<name>RSMA_CITK8</name>
<keyword id="KW-0963">Cytoplasm</keyword>
<keyword id="KW-0489">Methyltransferase</keyword>
<keyword id="KW-1185">Reference proteome</keyword>
<keyword id="KW-0694">RNA-binding</keyword>
<keyword id="KW-0698">rRNA processing</keyword>
<keyword id="KW-0949">S-adenosyl-L-methionine</keyword>
<keyword id="KW-0808">Transferase</keyword>
<protein>
    <recommendedName>
        <fullName evidence="1">Ribosomal RNA small subunit methyltransferase A</fullName>
        <ecNumber evidence="1">2.1.1.182</ecNumber>
    </recommendedName>
    <alternativeName>
        <fullName evidence="1">16S rRNA (adenine(1518)-N(6)/adenine(1519)-N(6))-dimethyltransferase</fullName>
    </alternativeName>
    <alternativeName>
        <fullName evidence="1">16S rRNA dimethyladenosine transferase</fullName>
    </alternativeName>
    <alternativeName>
        <fullName evidence="1">16S rRNA dimethylase</fullName>
    </alternativeName>
    <alternativeName>
        <fullName evidence="1">S-adenosylmethionine-6-N', N'-adenosyl(rRNA) dimethyltransferase</fullName>
    </alternativeName>
</protein>
<evidence type="ECO:0000255" key="1">
    <source>
        <dbReference type="HAMAP-Rule" id="MF_00607"/>
    </source>
</evidence>